<feature type="chain" id="PRO_1000144670" description="Large ribosomal subunit protein uL30">
    <location>
        <begin position="1"/>
        <end position="63"/>
    </location>
</feature>
<evidence type="ECO:0000255" key="1">
    <source>
        <dbReference type="HAMAP-Rule" id="MF_01371"/>
    </source>
</evidence>
<evidence type="ECO:0000305" key="2"/>
<sequence>MVQEKKLRVTLVKSKYGRKPGHRECIEGLGLRRMHQTVEVTDTPANRGMIEKVSYLLMIDEEV</sequence>
<protein>
    <recommendedName>
        <fullName evidence="1">Large ribosomal subunit protein uL30</fullName>
    </recommendedName>
    <alternativeName>
        <fullName evidence="2">50S ribosomal protein L30</fullName>
    </alternativeName>
</protein>
<name>RL30_COXB2</name>
<reference key="1">
    <citation type="journal article" date="2009" name="Infect. Immun.">
        <title>Comparative genomics reveal extensive transposon-mediated genomic plasticity and diversity among potential effector proteins within the genus Coxiella.</title>
        <authorList>
            <person name="Beare P.A."/>
            <person name="Unsworth N."/>
            <person name="Andoh M."/>
            <person name="Voth D.E."/>
            <person name="Omsland A."/>
            <person name="Gilk S.D."/>
            <person name="Williams K.P."/>
            <person name="Sobral B.W."/>
            <person name="Kupko J.J. III"/>
            <person name="Porcella S.F."/>
            <person name="Samuel J.E."/>
            <person name="Heinzen R.A."/>
        </authorList>
    </citation>
    <scope>NUCLEOTIDE SEQUENCE [LARGE SCALE GENOMIC DNA]</scope>
    <source>
        <strain>CbuG_Q212</strain>
    </source>
</reference>
<organism>
    <name type="scientific">Coxiella burnetii (strain CbuG_Q212)</name>
    <name type="common">Coxiella burnetii (strain Q212)</name>
    <dbReference type="NCBI Taxonomy" id="434923"/>
    <lineage>
        <taxon>Bacteria</taxon>
        <taxon>Pseudomonadati</taxon>
        <taxon>Pseudomonadota</taxon>
        <taxon>Gammaproteobacteria</taxon>
        <taxon>Legionellales</taxon>
        <taxon>Coxiellaceae</taxon>
        <taxon>Coxiella</taxon>
    </lineage>
</organism>
<gene>
    <name evidence="1" type="primary">rpmD</name>
    <name type="ordered locus">CbuG_1749</name>
</gene>
<keyword id="KW-0687">Ribonucleoprotein</keyword>
<keyword id="KW-0689">Ribosomal protein</keyword>
<comment type="subunit">
    <text evidence="1">Part of the 50S ribosomal subunit.</text>
</comment>
<comment type="similarity">
    <text evidence="1">Belongs to the universal ribosomal protein uL30 family.</text>
</comment>
<dbReference type="EMBL" id="CP001019">
    <property type="protein sequence ID" value="ACJ19023.1"/>
    <property type="molecule type" value="Genomic_DNA"/>
</dbReference>
<dbReference type="RefSeq" id="WP_005771513.1">
    <property type="nucleotide sequence ID" value="NC_011527.1"/>
</dbReference>
<dbReference type="SMR" id="B6J245"/>
<dbReference type="KEGG" id="cbg:CbuG_1749"/>
<dbReference type="HOGENOM" id="CLU_131047_1_4_6"/>
<dbReference type="GO" id="GO:0022625">
    <property type="term" value="C:cytosolic large ribosomal subunit"/>
    <property type="evidence" value="ECO:0007669"/>
    <property type="project" value="TreeGrafter"/>
</dbReference>
<dbReference type="GO" id="GO:0003735">
    <property type="term" value="F:structural constituent of ribosome"/>
    <property type="evidence" value="ECO:0007669"/>
    <property type="project" value="InterPro"/>
</dbReference>
<dbReference type="GO" id="GO:0006412">
    <property type="term" value="P:translation"/>
    <property type="evidence" value="ECO:0007669"/>
    <property type="project" value="UniProtKB-UniRule"/>
</dbReference>
<dbReference type="CDD" id="cd01658">
    <property type="entry name" value="Ribosomal_L30"/>
    <property type="match status" value="1"/>
</dbReference>
<dbReference type="FunFam" id="3.30.1390.20:FF:000001">
    <property type="entry name" value="50S ribosomal protein L30"/>
    <property type="match status" value="1"/>
</dbReference>
<dbReference type="Gene3D" id="3.30.1390.20">
    <property type="entry name" value="Ribosomal protein L30, ferredoxin-like fold domain"/>
    <property type="match status" value="1"/>
</dbReference>
<dbReference type="HAMAP" id="MF_01371_B">
    <property type="entry name" value="Ribosomal_uL30_B"/>
    <property type="match status" value="1"/>
</dbReference>
<dbReference type="InterPro" id="IPR036919">
    <property type="entry name" value="Ribo_uL30_ferredoxin-like_sf"/>
</dbReference>
<dbReference type="InterPro" id="IPR005996">
    <property type="entry name" value="Ribosomal_uL30_bac-type"/>
</dbReference>
<dbReference type="InterPro" id="IPR016082">
    <property type="entry name" value="Ribosomal_uL30_ferredoxin-like"/>
</dbReference>
<dbReference type="NCBIfam" id="TIGR01308">
    <property type="entry name" value="rpmD_bact"/>
    <property type="match status" value="1"/>
</dbReference>
<dbReference type="PANTHER" id="PTHR15892:SF2">
    <property type="entry name" value="LARGE RIBOSOMAL SUBUNIT PROTEIN UL30M"/>
    <property type="match status" value="1"/>
</dbReference>
<dbReference type="PANTHER" id="PTHR15892">
    <property type="entry name" value="MITOCHONDRIAL RIBOSOMAL PROTEIN L30"/>
    <property type="match status" value="1"/>
</dbReference>
<dbReference type="Pfam" id="PF00327">
    <property type="entry name" value="Ribosomal_L30"/>
    <property type="match status" value="1"/>
</dbReference>
<dbReference type="PIRSF" id="PIRSF002211">
    <property type="entry name" value="Ribosomal_L30_bac-type"/>
    <property type="match status" value="1"/>
</dbReference>
<dbReference type="SUPFAM" id="SSF55129">
    <property type="entry name" value="Ribosomal protein L30p/L7e"/>
    <property type="match status" value="1"/>
</dbReference>
<accession>B6J245</accession>
<proteinExistence type="inferred from homology"/>